<name>COX2_MYCMD</name>
<gene>
    <name type="primary">COX2</name>
</gene>
<organism>
    <name type="scientific">Mycosarcoma maydis</name>
    <name type="common">Corn smut fungus</name>
    <name type="synonym">Ustilago maydis</name>
    <dbReference type="NCBI Taxonomy" id="5270"/>
    <lineage>
        <taxon>Eukaryota</taxon>
        <taxon>Fungi</taxon>
        <taxon>Dikarya</taxon>
        <taxon>Basidiomycota</taxon>
        <taxon>Ustilaginomycotina</taxon>
        <taxon>Ustilaginomycetes</taxon>
        <taxon>Ustilaginales</taxon>
        <taxon>Ustilaginaceae</taxon>
        <taxon>Mycosarcoma</taxon>
    </lineage>
</organism>
<comment type="function">
    <text evidence="2">Component of the cytochrome c oxidase, the last enzyme in the mitochondrial electron transport chain which drives oxidative phosphorylation. The respiratory chain contains 3 multisubunit complexes succinate dehydrogenase (complex II, CII), ubiquinol-cytochrome c oxidoreductase (cytochrome b-c1 complex, complex III, CIII) and cytochrome c oxidase (complex IV, CIV), that cooperate to transfer electrons derived from NADH and succinate to molecular oxygen, creating an electrochemical gradient over the inner membrane that drives transmembrane transport and the ATP synthase. Cytochrome c oxidase is the component of the respiratory chain that catalyzes the reduction of oxygen to water. Electrons originating from reduced cytochrome c in the intermembrane space (IMS) are transferred via the dinuclear copper A center (CU(A)) of subunit 2 and heme A of subunit 1 to the active site in subunit 1, a binuclear center (BNC) formed by heme A3 and copper B (CU(B)). The BNC reduces molecular oxygen to 2 water molecules using 4 electrons from cytochrome c in the IMS and 4 protons from the mitochondrial matrix.</text>
</comment>
<comment type="catalytic activity">
    <reaction evidence="2">
        <text>4 Fe(II)-[cytochrome c] + O2 + 8 H(+)(in) = 4 Fe(III)-[cytochrome c] + 2 H2O + 4 H(+)(out)</text>
        <dbReference type="Rhea" id="RHEA:11436"/>
        <dbReference type="Rhea" id="RHEA-COMP:10350"/>
        <dbReference type="Rhea" id="RHEA-COMP:14399"/>
        <dbReference type="ChEBI" id="CHEBI:15377"/>
        <dbReference type="ChEBI" id="CHEBI:15378"/>
        <dbReference type="ChEBI" id="CHEBI:15379"/>
        <dbReference type="ChEBI" id="CHEBI:29033"/>
        <dbReference type="ChEBI" id="CHEBI:29034"/>
        <dbReference type="EC" id="7.1.1.9"/>
    </reaction>
    <physiologicalReaction direction="left-to-right" evidence="2">
        <dbReference type="Rhea" id="RHEA:11437"/>
    </physiologicalReaction>
</comment>
<comment type="cofactor">
    <cofactor evidence="2">
        <name>Cu cation</name>
        <dbReference type="ChEBI" id="CHEBI:23378"/>
    </cofactor>
    <text evidence="2">Binds a dinuclear copper A center per subunit.</text>
</comment>
<comment type="subunit">
    <text evidence="2">Component of the cytochrome c oxidase (complex IV, CIV), a multisubunit enzyme composed of a catalytic core of 3 subunits and several supernumerary subunits. The complex exists as a monomer or a dimer and forms supercomplexes (SCs) in the inner mitochondrial membrane with ubiquinol-cytochrome c oxidoreductase (cytochrome b-c1 complex, complex III, CIII).</text>
</comment>
<comment type="subcellular location">
    <subcellularLocation>
        <location evidence="2">Mitochondrion inner membrane</location>
        <topology evidence="2">Multi-pass membrane protein</topology>
    </subcellularLocation>
</comment>
<comment type="similarity">
    <text evidence="4">Belongs to the cytochrome c oxidase subunit 2 family.</text>
</comment>
<feature type="signal peptide" evidence="1">
    <location>
        <begin position="1"/>
        <end position="16"/>
    </location>
</feature>
<feature type="chain" id="PRO_0000271142" description="Cytochrome c oxidase subunit 2">
    <location>
        <begin position="17"/>
        <end position="255"/>
    </location>
</feature>
<feature type="topological domain" description="Mitochondrial intermembrane" evidence="3">
    <location>
        <begin position="17"/>
        <end position="43"/>
    </location>
</feature>
<feature type="transmembrane region" description="Helical" evidence="3">
    <location>
        <begin position="44"/>
        <end position="64"/>
    </location>
</feature>
<feature type="topological domain" description="Mitochondrial matrix" evidence="3">
    <location>
        <begin position="65"/>
        <end position="80"/>
    </location>
</feature>
<feature type="transmembrane region" description="Helical" evidence="3">
    <location>
        <begin position="81"/>
        <end position="101"/>
    </location>
</feature>
<feature type="topological domain" description="Mitochondrial intermembrane" evidence="3">
    <location>
        <begin position="102"/>
        <end position="255"/>
    </location>
</feature>
<feature type="binding site" evidence="2">
    <location>
        <position position="189"/>
    </location>
    <ligand>
        <name>Cu cation</name>
        <dbReference type="ChEBI" id="CHEBI:23378"/>
        <label>A1</label>
    </ligand>
</feature>
<feature type="binding site" evidence="2">
    <location>
        <position position="224"/>
    </location>
    <ligand>
        <name>Cu cation</name>
        <dbReference type="ChEBI" id="CHEBI:23378"/>
        <label>A1</label>
    </ligand>
</feature>
<feature type="binding site" evidence="2">
    <location>
        <position position="224"/>
    </location>
    <ligand>
        <name>Cu cation</name>
        <dbReference type="ChEBI" id="CHEBI:23378"/>
        <label>A2</label>
    </ligand>
</feature>
<feature type="binding site" evidence="2">
    <location>
        <position position="226"/>
    </location>
    <ligand>
        <name>Cu cation</name>
        <dbReference type="ChEBI" id="CHEBI:23378"/>
        <label>A2</label>
    </ligand>
</feature>
<feature type="binding site" evidence="2">
    <location>
        <position position="226"/>
    </location>
    <ligand>
        <name>Mg(2+)</name>
        <dbReference type="ChEBI" id="CHEBI:18420"/>
        <note>ligand shared with subunit 1</note>
    </ligand>
</feature>
<feature type="binding site" evidence="2">
    <location>
        <position position="228"/>
    </location>
    <ligand>
        <name>Cu cation</name>
        <dbReference type="ChEBI" id="CHEBI:23378"/>
        <label>A1</label>
    </ligand>
</feature>
<feature type="binding site" evidence="2">
    <location>
        <position position="228"/>
    </location>
    <ligand>
        <name>Cu cation</name>
        <dbReference type="ChEBI" id="CHEBI:23378"/>
        <label>A2</label>
    </ligand>
</feature>
<feature type="binding site" evidence="2">
    <location>
        <position position="232"/>
    </location>
    <ligand>
        <name>Cu cation</name>
        <dbReference type="ChEBI" id="CHEBI:23378"/>
        <label>A2</label>
    </ligand>
</feature>
<feature type="binding site" evidence="2">
    <location>
        <position position="235"/>
    </location>
    <ligand>
        <name>Cu cation</name>
        <dbReference type="ChEBI" id="CHEBI:23378"/>
        <label>A1</label>
    </ligand>
</feature>
<reference key="1">
    <citation type="submission" date="2005-08" db="EMBL/GenBank/DDBJ databases">
        <title>Annotation of mitochondrial genome of Ustilago maydis and comparative analysis of basidiomycete mtDNAs.</title>
        <authorList>
            <person name="Kennell J.C."/>
            <person name="Boehmer C."/>
        </authorList>
    </citation>
    <scope>NUCLEOTIDE SEQUENCE [LARGE SCALE GENOMIC DNA]</scope>
    <source>
        <strain>DSM 14603 / FGSC 9021 / UM521</strain>
    </source>
</reference>
<reference key="2">
    <citation type="journal article" date="2006" name="Nature">
        <title>Insights from the genome of the biotrophic fungal plant pathogen Ustilago maydis.</title>
        <authorList>
            <person name="Kaemper J."/>
            <person name="Kahmann R."/>
            <person name="Boelker M."/>
            <person name="Ma L.-J."/>
            <person name="Brefort T."/>
            <person name="Saville B.J."/>
            <person name="Banuett F."/>
            <person name="Kronstad J.W."/>
            <person name="Gold S.E."/>
            <person name="Mueller O."/>
            <person name="Perlin M.H."/>
            <person name="Woesten H.A.B."/>
            <person name="de Vries R."/>
            <person name="Ruiz-Herrera J."/>
            <person name="Reynaga-Pena C.G."/>
            <person name="Snetselaar K."/>
            <person name="McCann M."/>
            <person name="Perez-Martin J."/>
            <person name="Feldbruegge M."/>
            <person name="Basse C.W."/>
            <person name="Steinberg G."/>
            <person name="Ibeas J.I."/>
            <person name="Holloman W."/>
            <person name="Guzman P."/>
            <person name="Farman M.L."/>
            <person name="Stajich J.E."/>
            <person name="Sentandreu R."/>
            <person name="Gonzalez-Prieto J.M."/>
            <person name="Kennell J.C."/>
            <person name="Molina L."/>
            <person name="Schirawski J."/>
            <person name="Mendoza-Mendoza A."/>
            <person name="Greilinger D."/>
            <person name="Muench K."/>
            <person name="Roessel N."/>
            <person name="Scherer M."/>
            <person name="Vranes M."/>
            <person name="Ladendorf O."/>
            <person name="Vincon V."/>
            <person name="Fuchs U."/>
            <person name="Sandrock B."/>
            <person name="Meng S."/>
            <person name="Ho E.C.H."/>
            <person name="Cahill M.J."/>
            <person name="Boyce K.J."/>
            <person name="Klose J."/>
            <person name="Klosterman S.J."/>
            <person name="Deelstra H.J."/>
            <person name="Ortiz-Castellanos L."/>
            <person name="Li W."/>
            <person name="Sanchez-Alonso P."/>
            <person name="Schreier P.H."/>
            <person name="Haeuser-Hahn I."/>
            <person name="Vaupel M."/>
            <person name="Koopmann E."/>
            <person name="Friedrich G."/>
            <person name="Voss H."/>
            <person name="Schlueter T."/>
            <person name="Margolis J."/>
            <person name="Platt D."/>
            <person name="Swimmer C."/>
            <person name="Gnirke A."/>
            <person name="Chen F."/>
            <person name="Vysotskaia V."/>
            <person name="Mannhaupt G."/>
            <person name="Gueldener U."/>
            <person name="Muensterkoetter M."/>
            <person name="Haase D."/>
            <person name="Oesterheld M."/>
            <person name="Mewes H.-W."/>
            <person name="Mauceli E.W."/>
            <person name="DeCaprio D."/>
            <person name="Wade C.M."/>
            <person name="Butler J."/>
            <person name="Young S.K."/>
            <person name="Jaffe D.B."/>
            <person name="Calvo S.E."/>
            <person name="Nusbaum C."/>
            <person name="Galagan J.E."/>
            <person name="Birren B.W."/>
        </authorList>
    </citation>
    <scope>NUCLEOTIDE SEQUENCE [LARGE SCALE GENOMIC DNA]</scope>
    <source>
        <strain>DSM 14603 / FGSC 9021 / UM521</strain>
    </source>
</reference>
<sequence>MFNLFPPFGANTAIFNDAPQPWQVGFQDGASPTQEGITELHDSIFFYLVIICFGVLWVLSSVIVNFNSNKSQLVYKYANHGTLIELIWTITPALVLIAIAFPSFKLLYLMDEVISPSMTVKVAGHQWYWSAEYSDFINEDGESIEFDSYMVPETDLEDGQLRLLEVDNRMVVPIDTHIRFIVTGADVIHDFAVPSLGLKIDAVPGRLNQTSVLIEREGVFYGQCSEICGVYHGFMPIAIEAVTPEKYLAWIDSQA</sequence>
<geneLocation type="mitochondrion"/>
<accession>Q0H8Y7</accession>
<keyword id="KW-0186">Copper</keyword>
<keyword id="KW-0249">Electron transport</keyword>
<keyword id="KW-0460">Magnesium</keyword>
<keyword id="KW-0472">Membrane</keyword>
<keyword id="KW-0479">Metal-binding</keyword>
<keyword id="KW-0496">Mitochondrion</keyword>
<keyword id="KW-0999">Mitochondrion inner membrane</keyword>
<keyword id="KW-1185">Reference proteome</keyword>
<keyword id="KW-0679">Respiratory chain</keyword>
<keyword id="KW-0732">Signal</keyword>
<keyword id="KW-1278">Translocase</keyword>
<keyword id="KW-0812">Transmembrane</keyword>
<keyword id="KW-1133">Transmembrane helix</keyword>
<keyword id="KW-0813">Transport</keyword>
<evidence type="ECO:0000250" key="1"/>
<evidence type="ECO:0000250" key="2">
    <source>
        <dbReference type="UniProtKB" id="P00410"/>
    </source>
</evidence>
<evidence type="ECO:0000255" key="3"/>
<evidence type="ECO:0000305" key="4"/>
<proteinExistence type="inferred from homology"/>
<protein>
    <recommendedName>
        <fullName>Cytochrome c oxidase subunit 2</fullName>
        <ecNumber>7.1.1.9</ecNumber>
    </recommendedName>
    <alternativeName>
        <fullName>Cytochrome c oxidase polypeptide II</fullName>
    </alternativeName>
</protein>
<dbReference type="EC" id="7.1.1.9"/>
<dbReference type="EMBL" id="DQ157700">
    <property type="protein sequence ID" value="AAZ67008.1"/>
    <property type="molecule type" value="Genomic_DNA"/>
</dbReference>
<dbReference type="EMBL" id="AACP01000278">
    <property type="status" value="NOT_ANNOTATED_CDS"/>
    <property type="molecule type" value="Genomic_DNA"/>
</dbReference>
<dbReference type="RefSeq" id="YP_762685.1">
    <property type="nucleotide sequence ID" value="NC_008368.1"/>
</dbReference>
<dbReference type="SMR" id="Q0H8Y7"/>
<dbReference type="FunCoup" id="Q0H8Y7">
    <property type="interactions" value="165"/>
</dbReference>
<dbReference type="STRING" id="237631.Q0H8Y7"/>
<dbReference type="GeneID" id="4308289"/>
<dbReference type="InParanoid" id="Q0H8Y7"/>
<dbReference type="Proteomes" id="UP000000561">
    <property type="component" value="Mitochondrion"/>
</dbReference>
<dbReference type="GO" id="GO:0005743">
    <property type="term" value="C:mitochondrial inner membrane"/>
    <property type="evidence" value="ECO:0007669"/>
    <property type="project" value="UniProtKB-SubCell"/>
</dbReference>
<dbReference type="GO" id="GO:0005507">
    <property type="term" value="F:copper ion binding"/>
    <property type="evidence" value="ECO:0007669"/>
    <property type="project" value="InterPro"/>
</dbReference>
<dbReference type="GO" id="GO:0004129">
    <property type="term" value="F:cytochrome-c oxidase activity"/>
    <property type="evidence" value="ECO:0007669"/>
    <property type="project" value="UniProtKB-EC"/>
</dbReference>
<dbReference type="GO" id="GO:0042773">
    <property type="term" value="P:ATP synthesis coupled electron transport"/>
    <property type="evidence" value="ECO:0000318"/>
    <property type="project" value="GO_Central"/>
</dbReference>
<dbReference type="CDD" id="cd13912">
    <property type="entry name" value="CcO_II_C"/>
    <property type="match status" value="1"/>
</dbReference>
<dbReference type="FunFam" id="1.10.287.90:FF:000004">
    <property type="entry name" value="Cytochrome c oxidase subunit 2"/>
    <property type="match status" value="1"/>
</dbReference>
<dbReference type="FunFam" id="2.60.40.420:FF:000001">
    <property type="entry name" value="Cytochrome c oxidase subunit 2"/>
    <property type="match status" value="1"/>
</dbReference>
<dbReference type="Gene3D" id="1.10.287.90">
    <property type="match status" value="1"/>
</dbReference>
<dbReference type="Gene3D" id="2.60.40.420">
    <property type="entry name" value="Cupredoxins - blue copper proteins"/>
    <property type="match status" value="1"/>
</dbReference>
<dbReference type="InterPro" id="IPR045187">
    <property type="entry name" value="CcO_II"/>
</dbReference>
<dbReference type="InterPro" id="IPR002429">
    <property type="entry name" value="CcO_II-like_C"/>
</dbReference>
<dbReference type="InterPro" id="IPR034210">
    <property type="entry name" value="CcO_II_C"/>
</dbReference>
<dbReference type="InterPro" id="IPR001505">
    <property type="entry name" value="Copper_CuA"/>
</dbReference>
<dbReference type="InterPro" id="IPR008972">
    <property type="entry name" value="Cupredoxin"/>
</dbReference>
<dbReference type="InterPro" id="IPR014222">
    <property type="entry name" value="Cyt_c_oxidase_su2"/>
</dbReference>
<dbReference type="InterPro" id="IPR011759">
    <property type="entry name" value="Cyt_c_oxidase_su2_TM_dom"/>
</dbReference>
<dbReference type="InterPro" id="IPR036257">
    <property type="entry name" value="Cyt_c_oxidase_su2_TM_sf"/>
</dbReference>
<dbReference type="NCBIfam" id="TIGR02866">
    <property type="entry name" value="CoxB"/>
    <property type="match status" value="1"/>
</dbReference>
<dbReference type="PANTHER" id="PTHR22888:SF9">
    <property type="entry name" value="CYTOCHROME C OXIDASE SUBUNIT 2"/>
    <property type="match status" value="1"/>
</dbReference>
<dbReference type="PANTHER" id="PTHR22888">
    <property type="entry name" value="CYTOCHROME C OXIDASE, SUBUNIT II"/>
    <property type="match status" value="1"/>
</dbReference>
<dbReference type="Pfam" id="PF00116">
    <property type="entry name" value="COX2"/>
    <property type="match status" value="1"/>
</dbReference>
<dbReference type="Pfam" id="PF02790">
    <property type="entry name" value="COX2_TM"/>
    <property type="match status" value="1"/>
</dbReference>
<dbReference type="PRINTS" id="PR01166">
    <property type="entry name" value="CYCOXIDASEII"/>
</dbReference>
<dbReference type="SUPFAM" id="SSF49503">
    <property type="entry name" value="Cupredoxins"/>
    <property type="match status" value="1"/>
</dbReference>
<dbReference type="SUPFAM" id="SSF81464">
    <property type="entry name" value="Cytochrome c oxidase subunit II-like, transmembrane region"/>
    <property type="match status" value="1"/>
</dbReference>
<dbReference type="PROSITE" id="PS00078">
    <property type="entry name" value="COX2"/>
    <property type="match status" value="1"/>
</dbReference>
<dbReference type="PROSITE" id="PS50857">
    <property type="entry name" value="COX2_CUA"/>
    <property type="match status" value="1"/>
</dbReference>
<dbReference type="PROSITE" id="PS50999">
    <property type="entry name" value="COX2_TM"/>
    <property type="match status" value="1"/>
</dbReference>